<feature type="initiator methionine" description="Removed" evidence="2">
    <location>
        <position position="1"/>
    </location>
</feature>
<feature type="chain" id="PRO_0000126118" description="Mitotic spindle assembly checkpoint protein MAD2A">
    <location>
        <begin position="2"/>
        <end position="205"/>
    </location>
</feature>
<feature type="domain" description="HORMA" evidence="3">
    <location>
        <begin position="14"/>
        <end position="197"/>
    </location>
</feature>
<feature type="region of interest" description="Required for assuming the closed conformation and for interaction with CDC20" evidence="1">
    <location>
        <begin position="195"/>
        <end position="205"/>
    </location>
</feature>
<feature type="modified residue" description="N-acetylalanine" evidence="2">
    <location>
        <position position="2"/>
    </location>
</feature>
<feature type="modified residue" description="Phosphoserine" evidence="2">
    <location>
        <position position="130"/>
    </location>
</feature>
<feature type="modified residue" description="Phosphoserine" evidence="2">
    <location>
        <position position="170"/>
    </location>
</feature>
<feature type="modified residue" description="Phosphoserine" evidence="2">
    <location>
        <position position="185"/>
    </location>
</feature>
<feature type="modified residue" description="Phosphoserine" evidence="2">
    <location>
        <position position="195"/>
    </location>
</feature>
<feature type="sequence conflict" description="In Ref. 1; AAD09238." evidence="4" ref="1">
    <original>T</original>
    <variation>A</variation>
    <location>
        <position position="157"/>
    </location>
</feature>
<feature type="sequence conflict" description="In Ref. 1; AAD09238." evidence="4" ref="1">
    <original>C</original>
    <variation>S</variation>
    <location>
        <position position="178"/>
    </location>
</feature>
<feature type="sequence conflict" description="In Ref. 1; AAD09238." evidence="4" ref="1">
    <original>T</original>
    <variation>I</variation>
    <location>
        <position position="201"/>
    </location>
</feature>
<comment type="function">
    <text evidence="2">Component of the spindle-assembly checkpoint that prevents the onset of anaphase until all chromosomes are properly aligned at the metaphase plate (By similarity). In the closed conformation (C-MAD2) forms a heterotetrameric complex with MAD1L1 at unattached kinetochores during prometaphase, and recruits an open conformation of MAD2L1 (O-MAD2) which then promotes the conversion of O-MAD2 to C-MAD2 (By similarity). Required for the execution of the mitotic checkpoint which monitors the process of kinetochore-spindle attachment and inhibits the activity of the anaphase promoting complex by sequestering CDC20 until all chromosomes are aligned at the metaphase plate (By similarity).</text>
</comment>
<comment type="subunit">
    <text evidence="2">Monomer and homodimer (By similarity). Heterodimerizes with MAD2L1 in order to form a tetrameric MAD1L1-MAD2L1 core complex (By similarity). In the closed and open conformation, interacts with MAD1L1 (By similarity). Formation of a heterotetrameric core complex containing two molecules each of MAD1L1 and of MAD2L1 promotes binding of another molecule of MAD2L1 to each MAD2L1, resulting in a heterohexamer (By similarity). Interacts with MAD2L1BP (By similarity). Interacts with ADAM17/TACE (By similarity). Interacts with CDC20 (By similarity). Dimeric MAD2L1 in the closed conformation interacts with CDC20 (By similarity). Monomeric MAD2L1 in the open conformation does not interact with CDC20 (By similarity). CDC20 competes with MAD1L1 for MAD2L1 binding (By similarity). In the closed conformation, interacts with BUB1B (By similarity). Interacts with TTK (By similarity). Interacts with TPR (By similarity). Binds to UBD (via ubiquitin-like 1 domain) during mitosis (By similarity). Interacts with isoform 1 and isoform 2 of NEK2 (By similarity). Interacts with HSF1; this interaction occurs in mitosis (By similarity).</text>
</comment>
<comment type="interaction">
    <interactant intactId="EBI-2552918">
        <id>Q9Z1B5</id>
    </interactant>
    <interactant intactId="EBI-2552468">
        <id>Q7TSY8</id>
        <label>Sgo2</label>
    </interactant>
    <organismsDiffer>false</organismsDiffer>
    <experiments>3</experiments>
</comment>
<comment type="interaction">
    <interactant intactId="EBI-2552918">
        <id>Q9Z1B5</id>
    </interactant>
    <interactant intactId="EBI-529989">
        <id>Q9NRI5</id>
        <label>DISC1</label>
    </interactant>
    <organismsDiffer>true</organismsDiffer>
    <experiments>2</experiments>
</comment>
<comment type="subcellular location">
    <subcellularLocation>
        <location evidence="2">Nucleus</location>
    </subcellularLocation>
    <subcellularLocation>
        <location evidence="1">Chromosome</location>
        <location evidence="1">Centromere</location>
        <location evidence="1">Kinetochore</location>
    </subcellularLocation>
    <subcellularLocation>
        <location evidence="2">Cytoplasm</location>
    </subcellularLocation>
    <subcellularLocation>
        <location evidence="1">Cytoplasm</location>
        <location evidence="1">Cytoskeleton</location>
        <location evidence="1">Spindle pole</location>
    </subcellularLocation>
    <text evidence="1">Recruited by MAD1L1 to unattached kinetochores (By similarity). Recruited to the nuclear pore complex by TPR during interphase (By similarity). Recruited to kinetochores in late prometaphase after BUB1, CENPF, BUB1B and CENPE. Kinetochore association requires the presence of NEK2 (By similarity).</text>
</comment>
<comment type="domain">
    <text evidence="1">The protein has two highly different native conformations, an inactive open conformation that cannot bind CDC20 and that predominates in cytosolic monomers, and an active closed conformation. The protein in the closed conformation preferentially dimerizes with another molecule in the open conformation, but can also form a dimer with a molecule in the closed conformation. Formation of a heterotetrameric core complex containing two molecules of MAD1L1 and of MAD2L1 in the closed conformation promotes binding of another molecule of MAD2L1 in the open conformation and the conversion of the open to the closed form, and thereby promotes interaction with CDC20 (By similarity).</text>
</comment>
<comment type="PTM">
    <text evidence="1">Phosphorylated on multiple serine residues. The level of phosphorylation varies during the cell cycle and is highest during mitosis. Phosphorylation abolishes interaction with MAD1L1 and reduces interaction with CDC20. Phosphorylated by NEK2 (By similarity).</text>
</comment>
<comment type="similarity">
    <text evidence="4">Belongs to the MAD2 family.</text>
</comment>
<sequence>MAQQLAREQGITLRGSAEIVAEFFSFGINSILYQRGIYPSETFTRVQKYGLTLLTTTDPELIKYLNNVVEQLKEWLYKCSVQKLVVVISNIESGEVLERWQFDIECDKTAKEEGVRREKSQKAIQDEIRSVIRQITATVTFLPLLEVSCSFDLLIYTDKDLVVPEKWEESGPQFITNCEEVRLRSFTTTIHKVNSMVAYKTPVND</sequence>
<proteinExistence type="evidence at protein level"/>
<evidence type="ECO:0000250" key="1"/>
<evidence type="ECO:0000250" key="2">
    <source>
        <dbReference type="UniProtKB" id="Q13257"/>
    </source>
</evidence>
<evidence type="ECO:0000255" key="3">
    <source>
        <dbReference type="PROSITE-ProRule" id="PRU00109"/>
    </source>
</evidence>
<evidence type="ECO:0000305" key="4"/>
<name>MD2L1_MOUSE</name>
<organism>
    <name type="scientific">Mus musculus</name>
    <name type="common">Mouse</name>
    <dbReference type="NCBI Taxonomy" id="10090"/>
    <lineage>
        <taxon>Eukaryota</taxon>
        <taxon>Metazoa</taxon>
        <taxon>Chordata</taxon>
        <taxon>Craniata</taxon>
        <taxon>Vertebrata</taxon>
        <taxon>Euteleostomi</taxon>
        <taxon>Mammalia</taxon>
        <taxon>Eutheria</taxon>
        <taxon>Euarchontoglires</taxon>
        <taxon>Glires</taxon>
        <taxon>Rodentia</taxon>
        <taxon>Myomorpha</taxon>
        <taxon>Muroidea</taxon>
        <taxon>Muridae</taxon>
        <taxon>Murinae</taxon>
        <taxon>Mus</taxon>
        <taxon>Mus</taxon>
    </lineage>
</organism>
<reference key="1">
    <citation type="submission" date="1997-01" db="EMBL/GenBank/DDBJ databases">
        <title>Identification of a novel component of the spindle assembly checkpoint in mammalian cells.</title>
        <authorList>
            <person name="Jin D.-Y."/>
            <person name="Jeang K.-T."/>
        </authorList>
    </citation>
    <scope>NUCLEOTIDE SEQUENCE [MRNA]</scope>
    <source>
        <strain>C57BL/6J</strain>
        <tissue>Embryo</tissue>
    </source>
</reference>
<reference key="2">
    <citation type="journal article" date="2000" name="Cell">
        <title>Chromosome missegregation and apoptosis in mice lacking the mitotic checkpoint protein Mad2.</title>
        <authorList>
            <person name="Dobles M."/>
            <person name="Liberal V."/>
            <person name="Scott M.L."/>
            <person name="Benezra R."/>
            <person name="Sorger P.K."/>
        </authorList>
    </citation>
    <scope>NUCLEOTIDE SEQUENCE [GENOMIC DNA]</scope>
    <source>
        <strain>129</strain>
    </source>
</reference>
<reference key="3">
    <citation type="journal article" date="2005" name="Science">
        <title>The transcriptional landscape of the mammalian genome.</title>
        <authorList>
            <person name="Carninci P."/>
            <person name="Kasukawa T."/>
            <person name="Katayama S."/>
            <person name="Gough J."/>
            <person name="Frith M.C."/>
            <person name="Maeda N."/>
            <person name="Oyama R."/>
            <person name="Ravasi T."/>
            <person name="Lenhard B."/>
            <person name="Wells C."/>
            <person name="Kodzius R."/>
            <person name="Shimokawa K."/>
            <person name="Bajic V.B."/>
            <person name="Brenner S.E."/>
            <person name="Batalov S."/>
            <person name="Forrest A.R."/>
            <person name="Zavolan M."/>
            <person name="Davis M.J."/>
            <person name="Wilming L.G."/>
            <person name="Aidinis V."/>
            <person name="Allen J.E."/>
            <person name="Ambesi-Impiombato A."/>
            <person name="Apweiler R."/>
            <person name="Aturaliya R.N."/>
            <person name="Bailey T.L."/>
            <person name="Bansal M."/>
            <person name="Baxter L."/>
            <person name="Beisel K.W."/>
            <person name="Bersano T."/>
            <person name="Bono H."/>
            <person name="Chalk A.M."/>
            <person name="Chiu K.P."/>
            <person name="Choudhary V."/>
            <person name="Christoffels A."/>
            <person name="Clutterbuck D.R."/>
            <person name="Crowe M.L."/>
            <person name="Dalla E."/>
            <person name="Dalrymple B.P."/>
            <person name="de Bono B."/>
            <person name="Della Gatta G."/>
            <person name="di Bernardo D."/>
            <person name="Down T."/>
            <person name="Engstrom P."/>
            <person name="Fagiolini M."/>
            <person name="Faulkner G."/>
            <person name="Fletcher C.F."/>
            <person name="Fukushima T."/>
            <person name="Furuno M."/>
            <person name="Futaki S."/>
            <person name="Gariboldi M."/>
            <person name="Georgii-Hemming P."/>
            <person name="Gingeras T.R."/>
            <person name="Gojobori T."/>
            <person name="Green R.E."/>
            <person name="Gustincich S."/>
            <person name="Harbers M."/>
            <person name="Hayashi Y."/>
            <person name="Hensch T.K."/>
            <person name="Hirokawa N."/>
            <person name="Hill D."/>
            <person name="Huminiecki L."/>
            <person name="Iacono M."/>
            <person name="Ikeo K."/>
            <person name="Iwama A."/>
            <person name="Ishikawa T."/>
            <person name="Jakt M."/>
            <person name="Kanapin A."/>
            <person name="Katoh M."/>
            <person name="Kawasawa Y."/>
            <person name="Kelso J."/>
            <person name="Kitamura H."/>
            <person name="Kitano H."/>
            <person name="Kollias G."/>
            <person name="Krishnan S.P."/>
            <person name="Kruger A."/>
            <person name="Kummerfeld S.K."/>
            <person name="Kurochkin I.V."/>
            <person name="Lareau L.F."/>
            <person name="Lazarevic D."/>
            <person name="Lipovich L."/>
            <person name="Liu J."/>
            <person name="Liuni S."/>
            <person name="McWilliam S."/>
            <person name="Madan Babu M."/>
            <person name="Madera M."/>
            <person name="Marchionni L."/>
            <person name="Matsuda H."/>
            <person name="Matsuzawa S."/>
            <person name="Miki H."/>
            <person name="Mignone F."/>
            <person name="Miyake S."/>
            <person name="Morris K."/>
            <person name="Mottagui-Tabar S."/>
            <person name="Mulder N."/>
            <person name="Nakano N."/>
            <person name="Nakauchi H."/>
            <person name="Ng P."/>
            <person name="Nilsson R."/>
            <person name="Nishiguchi S."/>
            <person name="Nishikawa S."/>
            <person name="Nori F."/>
            <person name="Ohara O."/>
            <person name="Okazaki Y."/>
            <person name="Orlando V."/>
            <person name="Pang K.C."/>
            <person name="Pavan W.J."/>
            <person name="Pavesi G."/>
            <person name="Pesole G."/>
            <person name="Petrovsky N."/>
            <person name="Piazza S."/>
            <person name="Reed J."/>
            <person name="Reid J.F."/>
            <person name="Ring B.Z."/>
            <person name="Ringwald M."/>
            <person name="Rost B."/>
            <person name="Ruan Y."/>
            <person name="Salzberg S.L."/>
            <person name="Sandelin A."/>
            <person name="Schneider C."/>
            <person name="Schoenbach C."/>
            <person name="Sekiguchi K."/>
            <person name="Semple C.A."/>
            <person name="Seno S."/>
            <person name="Sessa L."/>
            <person name="Sheng Y."/>
            <person name="Shibata Y."/>
            <person name="Shimada H."/>
            <person name="Shimada K."/>
            <person name="Silva D."/>
            <person name="Sinclair B."/>
            <person name="Sperling S."/>
            <person name="Stupka E."/>
            <person name="Sugiura K."/>
            <person name="Sultana R."/>
            <person name="Takenaka Y."/>
            <person name="Taki K."/>
            <person name="Tammoja K."/>
            <person name="Tan S.L."/>
            <person name="Tang S."/>
            <person name="Taylor M.S."/>
            <person name="Tegner J."/>
            <person name="Teichmann S.A."/>
            <person name="Ueda H.R."/>
            <person name="van Nimwegen E."/>
            <person name="Verardo R."/>
            <person name="Wei C.L."/>
            <person name="Yagi K."/>
            <person name="Yamanishi H."/>
            <person name="Zabarovsky E."/>
            <person name="Zhu S."/>
            <person name="Zimmer A."/>
            <person name="Hide W."/>
            <person name="Bult C."/>
            <person name="Grimmond S.M."/>
            <person name="Teasdale R.D."/>
            <person name="Liu E.T."/>
            <person name="Brusic V."/>
            <person name="Quackenbush J."/>
            <person name="Wahlestedt C."/>
            <person name="Mattick J.S."/>
            <person name="Hume D.A."/>
            <person name="Kai C."/>
            <person name="Sasaki D."/>
            <person name="Tomaru Y."/>
            <person name="Fukuda S."/>
            <person name="Kanamori-Katayama M."/>
            <person name="Suzuki M."/>
            <person name="Aoki J."/>
            <person name="Arakawa T."/>
            <person name="Iida J."/>
            <person name="Imamura K."/>
            <person name="Itoh M."/>
            <person name="Kato T."/>
            <person name="Kawaji H."/>
            <person name="Kawagashira N."/>
            <person name="Kawashima T."/>
            <person name="Kojima M."/>
            <person name="Kondo S."/>
            <person name="Konno H."/>
            <person name="Nakano K."/>
            <person name="Ninomiya N."/>
            <person name="Nishio T."/>
            <person name="Okada M."/>
            <person name="Plessy C."/>
            <person name="Shibata K."/>
            <person name="Shiraki T."/>
            <person name="Suzuki S."/>
            <person name="Tagami M."/>
            <person name="Waki K."/>
            <person name="Watahiki A."/>
            <person name="Okamura-Oho Y."/>
            <person name="Suzuki H."/>
            <person name="Kawai J."/>
            <person name="Hayashizaki Y."/>
        </authorList>
    </citation>
    <scope>NUCLEOTIDE SEQUENCE [LARGE SCALE MRNA]</scope>
    <source>
        <strain>C57BL/6J</strain>
    </source>
</reference>
<reference key="4">
    <citation type="journal article" date="2010" name="Cell">
        <title>A tissue-specific atlas of mouse protein phosphorylation and expression.</title>
        <authorList>
            <person name="Huttlin E.L."/>
            <person name="Jedrychowski M.P."/>
            <person name="Elias J.E."/>
            <person name="Goswami T."/>
            <person name="Rad R."/>
            <person name="Beausoleil S.A."/>
            <person name="Villen J."/>
            <person name="Haas W."/>
            <person name="Sowa M.E."/>
            <person name="Gygi S.P."/>
        </authorList>
    </citation>
    <scope>IDENTIFICATION BY MASS SPECTROMETRY [LARGE SCALE ANALYSIS]</scope>
    <source>
        <tissue>Liver</tissue>
        <tissue>Lung</tissue>
        <tissue>Pancreas</tissue>
        <tissue>Spleen</tissue>
        <tissue>Testis</tissue>
    </source>
</reference>
<gene>
    <name type="primary">Mad2l1</name>
    <name type="synonym">Mad2a</name>
</gene>
<protein>
    <recommendedName>
        <fullName>Mitotic spindle assembly checkpoint protein MAD2A</fullName>
    </recommendedName>
    <alternativeName>
        <fullName>Mitotic arrest deficient 2-like protein 1</fullName>
        <shortName>MAD2-like protein 1</shortName>
    </alternativeName>
</protein>
<accession>Q9Z1B5</accession>
<accession>Q9JI53</accession>
<keyword id="KW-0007">Acetylation</keyword>
<keyword id="KW-0131">Cell cycle</keyword>
<keyword id="KW-0132">Cell division</keyword>
<keyword id="KW-0137">Centromere</keyword>
<keyword id="KW-0158">Chromosome</keyword>
<keyword id="KW-0963">Cytoplasm</keyword>
<keyword id="KW-0206">Cytoskeleton</keyword>
<keyword id="KW-0995">Kinetochore</keyword>
<keyword id="KW-0498">Mitosis</keyword>
<keyword id="KW-0539">Nucleus</keyword>
<keyword id="KW-0597">Phosphoprotein</keyword>
<keyword id="KW-1185">Reference proteome</keyword>
<dbReference type="EMBL" id="U83902">
    <property type="protein sequence ID" value="AAD09238.1"/>
    <property type="molecule type" value="mRNA"/>
</dbReference>
<dbReference type="EMBL" id="AF261919">
    <property type="protein sequence ID" value="AAF69525.1"/>
    <property type="molecule type" value="Genomic_DNA"/>
</dbReference>
<dbReference type="EMBL" id="AK082934">
    <property type="protein sequence ID" value="BAC38700.1"/>
    <property type="molecule type" value="mRNA"/>
</dbReference>
<dbReference type="CCDS" id="CCDS20210.1"/>
<dbReference type="RefSeq" id="NP_001342553.1">
    <property type="nucleotide sequence ID" value="NM_001355624.1"/>
</dbReference>
<dbReference type="RefSeq" id="NP_062372.2">
    <property type="nucleotide sequence ID" value="NM_019499.4"/>
</dbReference>
<dbReference type="RefSeq" id="XP_006506469.1">
    <property type="nucleotide sequence ID" value="XM_006506406.3"/>
</dbReference>
<dbReference type="SMR" id="Q9Z1B5"/>
<dbReference type="BioGRID" id="207818">
    <property type="interactions" value="108"/>
</dbReference>
<dbReference type="ComplexPortal" id="CPX-3968">
    <property type="entry name" value="Mitotic Checkpoint Complex"/>
</dbReference>
<dbReference type="ComplexPortal" id="CPX-87">
    <property type="entry name" value="Mitotic spindle assembly checkpoint Mad1-Mad2 complex"/>
</dbReference>
<dbReference type="ComplexPortal" id="CPX-90">
    <property type="entry name" value="Mitotic spindle assembly checkpoint complex MAD2"/>
</dbReference>
<dbReference type="FunCoup" id="Q9Z1B5">
    <property type="interactions" value="2673"/>
</dbReference>
<dbReference type="IntAct" id="Q9Z1B5">
    <property type="interactions" value="107"/>
</dbReference>
<dbReference type="MINT" id="Q9Z1B5"/>
<dbReference type="STRING" id="10090.ENSMUSP00000112304"/>
<dbReference type="GlyGen" id="Q9Z1B5">
    <property type="glycosylation" value="1 site, 1 O-linked glycan (1 site)"/>
</dbReference>
<dbReference type="iPTMnet" id="Q9Z1B5"/>
<dbReference type="PhosphoSitePlus" id="Q9Z1B5"/>
<dbReference type="PaxDb" id="10090-ENSMUSP00000098897"/>
<dbReference type="ProteomicsDB" id="295982"/>
<dbReference type="Pumba" id="Q9Z1B5"/>
<dbReference type="TopDownProteomics" id="Q9Z1B5"/>
<dbReference type="Antibodypedia" id="15732">
    <property type="antibodies" value="612 antibodies from 46 providers"/>
</dbReference>
<dbReference type="DNASU" id="56150"/>
<dbReference type="Ensembl" id="ENSMUST00000101343.2">
    <property type="protein sequence ID" value="ENSMUSP00000098897.2"/>
    <property type="gene ID" value="ENSMUSG00000029910.15"/>
</dbReference>
<dbReference type="Ensembl" id="ENSMUST00000116605.8">
    <property type="protein sequence ID" value="ENSMUSP00000112304.2"/>
    <property type="gene ID" value="ENSMUSG00000029910.15"/>
</dbReference>
<dbReference type="GeneID" id="56150"/>
<dbReference type="KEGG" id="mmu:56150"/>
<dbReference type="UCSC" id="uc009cen.1">
    <property type="organism name" value="mouse"/>
</dbReference>
<dbReference type="AGR" id="MGI:1860374"/>
<dbReference type="CTD" id="4085"/>
<dbReference type="MGI" id="MGI:1860374">
    <property type="gene designation" value="Mad2l1"/>
</dbReference>
<dbReference type="VEuPathDB" id="HostDB:ENSMUSG00000029910"/>
<dbReference type="eggNOG" id="KOG3285">
    <property type="taxonomic scope" value="Eukaryota"/>
</dbReference>
<dbReference type="GeneTree" id="ENSGT00940000153395"/>
<dbReference type="HOGENOM" id="CLU_072097_1_0_1"/>
<dbReference type="InParanoid" id="Q9Z1B5"/>
<dbReference type="OMA" id="EWLYECL"/>
<dbReference type="OrthoDB" id="1806at2759"/>
<dbReference type="PhylomeDB" id="Q9Z1B5"/>
<dbReference type="TreeFam" id="TF101084"/>
<dbReference type="Reactome" id="R-MMU-141405">
    <property type="pathway name" value="Inhibition of the proteolytic activity of APC/C required for the onset of anaphase by mitotic spindle checkpoint components"/>
</dbReference>
<dbReference type="Reactome" id="R-MMU-141430">
    <property type="pathway name" value="Inactivation of APC/C via direct inhibition of the APC/C complex"/>
</dbReference>
<dbReference type="Reactome" id="R-MMU-141444">
    <property type="pathway name" value="Amplification of signal from unattached kinetochores via a MAD2 inhibitory signal"/>
</dbReference>
<dbReference type="Reactome" id="R-MMU-174184">
    <property type="pathway name" value="Cdc20:Phospho-APC/C mediated degradation of Cyclin A"/>
</dbReference>
<dbReference type="Reactome" id="R-MMU-176409">
    <property type="pathway name" value="APC/C:Cdc20 mediated degradation of mitotic proteins"/>
</dbReference>
<dbReference type="Reactome" id="R-MMU-179409">
    <property type="pathway name" value="APC-Cdc20 mediated degradation of Nek2A"/>
</dbReference>
<dbReference type="Reactome" id="R-MMU-2467813">
    <property type="pathway name" value="Separation of Sister Chromatids"/>
</dbReference>
<dbReference type="Reactome" id="R-MMU-2500257">
    <property type="pathway name" value="Resolution of Sister Chromatid Cohesion"/>
</dbReference>
<dbReference type="Reactome" id="R-MMU-5663220">
    <property type="pathway name" value="RHO GTPases Activate Formins"/>
</dbReference>
<dbReference type="Reactome" id="R-MMU-68877">
    <property type="pathway name" value="Mitotic Prometaphase"/>
</dbReference>
<dbReference type="Reactome" id="R-MMU-9648025">
    <property type="pathway name" value="EML4 and NUDC in mitotic spindle formation"/>
</dbReference>
<dbReference type="BioGRID-ORCS" id="56150">
    <property type="hits" value="21 hits in 72 CRISPR screens"/>
</dbReference>
<dbReference type="ChiTaRS" id="Mad2l1">
    <property type="organism name" value="mouse"/>
</dbReference>
<dbReference type="PRO" id="PR:Q9Z1B5"/>
<dbReference type="Proteomes" id="UP000000589">
    <property type="component" value="Chromosome 6"/>
</dbReference>
<dbReference type="RNAct" id="Q9Z1B5">
    <property type="molecule type" value="protein"/>
</dbReference>
<dbReference type="Bgee" id="ENSMUSG00000029910">
    <property type="expression patterns" value="Expressed in animal zygote and 264 other cell types or tissues"/>
</dbReference>
<dbReference type="ExpressionAtlas" id="Q9Z1B5">
    <property type="expression patterns" value="baseline and differential"/>
</dbReference>
<dbReference type="GO" id="GO:0005694">
    <property type="term" value="C:chromosome"/>
    <property type="evidence" value="ECO:0000314"/>
    <property type="project" value="MGI"/>
</dbReference>
<dbReference type="GO" id="GO:0000775">
    <property type="term" value="C:chromosome, centromeric region"/>
    <property type="evidence" value="ECO:0000314"/>
    <property type="project" value="MGI"/>
</dbReference>
<dbReference type="GO" id="GO:0005737">
    <property type="term" value="C:cytoplasm"/>
    <property type="evidence" value="ECO:0000314"/>
    <property type="project" value="MGI"/>
</dbReference>
<dbReference type="GO" id="GO:0005829">
    <property type="term" value="C:cytosol"/>
    <property type="evidence" value="ECO:0000250"/>
    <property type="project" value="UniProtKB"/>
</dbReference>
<dbReference type="GO" id="GO:0000776">
    <property type="term" value="C:kinetochore"/>
    <property type="evidence" value="ECO:0000314"/>
    <property type="project" value="MGI"/>
</dbReference>
<dbReference type="GO" id="GO:0033597">
    <property type="term" value="C:mitotic checkpoint complex"/>
    <property type="evidence" value="ECO:0000266"/>
    <property type="project" value="ComplexPortal"/>
</dbReference>
<dbReference type="GO" id="GO:0072686">
    <property type="term" value="C:mitotic spindle"/>
    <property type="evidence" value="ECO:0000250"/>
    <property type="project" value="UniProtKB"/>
</dbReference>
<dbReference type="GO" id="GO:1990728">
    <property type="term" value="C:mitotic spindle assembly checkpoint MAD1-MAD2 complex"/>
    <property type="evidence" value="ECO:0000353"/>
    <property type="project" value="ComplexPortal"/>
</dbReference>
<dbReference type="GO" id="GO:0044615">
    <property type="term" value="C:nuclear pore nuclear basket"/>
    <property type="evidence" value="ECO:0007669"/>
    <property type="project" value="Ensembl"/>
</dbReference>
<dbReference type="GO" id="GO:0005654">
    <property type="term" value="C:nucleoplasm"/>
    <property type="evidence" value="ECO:0007669"/>
    <property type="project" value="Ensembl"/>
</dbReference>
<dbReference type="GO" id="GO:0005634">
    <property type="term" value="C:nucleus"/>
    <property type="evidence" value="ECO:0000314"/>
    <property type="project" value="MGI"/>
</dbReference>
<dbReference type="GO" id="GO:0048471">
    <property type="term" value="C:perinuclear region of cytoplasm"/>
    <property type="evidence" value="ECO:0000250"/>
    <property type="project" value="UniProtKB"/>
</dbReference>
<dbReference type="GO" id="GO:0000922">
    <property type="term" value="C:spindle pole"/>
    <property type="evidence" value="ECO:0000314"/>
    <property type="project" value="MGI"/>
</dbReference>
<dbReference type="GO" id="GO:0042803">
    <property type="term" value="F:protein homodimerization activity"/>
    <property type="evidence" value="ECO:0007669"/>
    <property type="project" value="Ensembl"/>
</dbReference>
<dbReference type="GO" id="GO:0051301">
    <property type="term" value="P:cell division"/>
    <property type="evidence" value="ECO:0007669"/>
    <property type="project" value="UniProtKB-KW"/>
</dbReference>
<dbReference type="GO" id="GO:0051660">
    <property type="term" value="P:establishment of centrosome localization"/>
    <property type="evidence" value="ECO:0007669"/>
    <property type="project" value="Ensembl"/>
</dbReference>
<dbReference type="GO" id="GO:0000132">
    <property type="term" value="P:establishment of mitotic spindle orientation"/>
    <property type="evidence" value="ECO:0007669"/>
    <property type="project" value="Ensembl"/>
</dbReference>
<dbReference type="GO" id="GO:0000070">
    <property type="term" value="P:mitotic sister chromatid segregation"/>
    <property type="evidence" value="ECO:0000315"/>
    <property type="project" value="MGI"/>
</dbReference>
<dbReference type="GO" id="GO:0007094">
    <property type="term" value="P:mitotic spindle assembly checkpoint signaling"/>
    <property type="evidence" value="ECO:0000315"/>
    <property type="project" value="MGI"/>
</dbReference>
<dbReference type="GO" id="GO:0045930">
    <property type="term" value="P:negative regulation of mitotic cell cycle"/>
    <property type="evidence" value="ECO:0000266"/>
    <property type="project" value="MGI"/>
</dbReference>
<dbReference type="GO" id="GO:0045841">
    <property type="term" value="P:negative regulation of mitotic metaphase/anaphase transition"/>
    <property type="evidence" value="ECO:0000304"/>
    <property type="project" value="MGI"/>
</dbReference>
<dbReference type="GO" id="GO:0042177">
    <property type="term" value="P:negative regulation of protein catabolic process"/>
    <property type="evidence" value="ECO:0000250"/>
    <property type="project" value="UniProtKB"/>
</dbReference>
<dbReference type="GO" id="GO:0090267">
    <property type="term" value="P:positive regulation of mitotic cell cycle spindle assembly checkpoint"/>
    <property type="evidence" value="ECO:0000266"/>
    <property type="project" value="ComplexPortal"/>
</dbReference>
<dbReference type="FunFam" id="3.30.900.10:FF:000002">
    <property type="entry name" value="Mitotic spindle assembly checkpoint protein MAD2A"/>
    <property type="match status" value="1"/>
</dbReference>
<dbReference type="Gene3D" id="3.30.900.10">
    <property type="entry name" value="HORMA domain"/>
    <property type="match status" value="1"/>
</dbReference>
<dbReference type="InterPro" id="IPR003511">
    <property type="entry name" value="HORMA_dom"/>
</dbReference>
<dbReference type="InterPro" id="IPR036570">
    <property type="entry name" value="HORMA_dom_sf"/>
</dbReference>
<dbReference type="InterPro" id="IPR045091">
    <property type="entry name" value="Mad2-like"/>
</dbReference>
<dbReference type="PANTHER" id="PTHR11842">
    <property type="entry name" value="MITOTIC SPINDLE ASSEMBLY CHECKPOINT PROTEIN MAD2"/>
    <property type="match status" value="1"/>
</dbReference>
<dbReference type="PANTHER" id="PTHR11842:SF11">
    <property type="entry name" value="MITOTIC SPINDLE ASSEMBLY CHECKPOINT PROTEIN MAD2A"/>
    <property type="match status" value="1"/>
</dbReference>
<dbReference type="Pfam" id="PF02301">
    <property type="entry name" value="HORMA"/>
    <property type="match status" value="1"/>
</dbReference>
<dbReference type="SUPFAM" id="SSF56019">
    <property type="entry name" value="The spindle assembly checkpoint protein mad2"/>
    <property type="match status" value="1"/>
</dbReference>
<dbReference type="PROSITE" id="PS50815">
    <property type="entry name" value="HORMA"/>
    <property type="match status" value="1"/>
</dbReference>